<sequence length="790" mass="85391">MCSTYGLLSFEFSDTAAMDPIFFSPTNGIPSESKLATYMNRQNVATPSGYGLNNGFSLLNLDSPLNKKSQVTPQSPEFIPTRLGSTPNFYAPYHNAPMQLSNGLNGVNGLTAAAAAAAAAAAAAAAAVPSSTSSASSASVTISKTANGGASMLALQKTASIASVTIAQQQPQHPQKQQQHPPSVGGGAVSAASAPIAISGAPPNPAAAPFVSSMSAQTPLKGRGAMMRQESPTAAMISGAGPGEKSPPHGMTPHGASPIPSALPTSVHQENVGGTIYFYPTANAQNSQPVVNSMVVDGTHPALHGVSAVAPMSAGVPAAMMYTGHVYPGPSSNVVTMQPKTLLESAFFMPDEMRAEVLARNEISNLIMDAAEAAQHALPLEVENYHALYPLEPPAQPLHAKLTFPATTYRATHNTTGYKYCLRRIHGFRLQSTKCMTLVEMWKKLQHTNVVQLREVFTTKAFGDNSLVLVYDYHPGSQTLLAKYFTPAPETNGYTDPFQGEARPFSHKSNMQRTSNGPLLPEATIWSIIMQLTAGLKAIHHAGLACKVLDPTKIIVTGKRVRFSSCCISDITQFDPNASNPLALVNMHQQDDLTALGRLVLALACRCLQSVQRDNVQSSIDMVTRNYSTDLRNFIVYLFTTNNRRSVTDLMPMIGARFYTQLDALQSKIDMQEDELAKEMENGRLYRILVKLNSINERPDFNLDCTWSETGDRYMLKLFRDYLFHSVTEDGRPWLDHAHIVQCLNKLDAGSIERVQLMSRDEQSVLIVSYAELKNCLENAFSELMSSAAN</sequence>
<dbReference type="EMBL" id="AE014296">
    <property type="protein sequence ID" value="AAN11527.1"/>
    <property type="molecule type" value="Genomic_DNA"/>
</dbReference>
<dbReference type="EMBL" id="AY061183">
    <property type="protein sequence ID" value="AAL28731.1"/>
    <property type="molecule type" value="mRNA"/>
</dbReference>
<dbReference type="RefSeq" id="NP_647767.1">
    <property type="nucleotide sequence ID" value="NM_139510.4"/>
</dbReference>
<dbReference type="PDB" id="4BWP">
    <property type="method" value="X-ray"/>
    <property type="resolution" value="3.60 A"/>
    <property type="chains" value="A/B=349-790"/>
</dbReference>
<dbReference type="PDBsum" id="4BWP"/>
<dbReference type="SMR" id="Q95RR8"/>
<dbReference type="BioGRID" id="63867">
    <property type="interactions" value="81"/>
</dbReference>
<dbReference type="DIP" id="DIP-17364N"/>
<dbReference type="FunCoup" id="Q95RR8">
    <property type="interactions" value="1905"/>
</dbReference>
<dbReference type="IntAct" id="Q95RR8">
    <property type="interactions" value="20"/>
</dbReference>
<dbReference type="STRING" id="7227.FBpp0072861"/>
<dbReference type="GlyGen" id="Q95RR8">
    <property type="glycosylation" value="1 site, 1 O-linked glycan (1 site)"/>
</dbReference>
<dbReference type="PaxDb" id="7227-FBpp0072861"/>
<dbReference type="DNASU" id="38369"/>
<dbReference type="EnsemblMetazoa" id="FBtr0072991">
    <property type="protein sequence ID" value="FBpp0072861"/>
    <property type="gene ID" value="FBgn0035397"/>
</dbReference>
<dbReference type="GeneID" id="38369"/>
<dbReference type="KEGG" id="dme:Dmel_CG11486"/>
<dbReference type="UCSC" id="CG11486-RG">
    <property type="organism name" value="d. melanogaster"/>
</dbReference>
<dbReference type="AGR" id="FB:FBgn0035397"/>
<dbReference type="CTD" id="255967"/>
<dbReference type="FlyBase" id="FBgn0035397">
    <property type="gene designation" value="PAN3"/>
</dbReference>
<dbReference type="VEuPathDB" id="VectorBase:FBgn0035397"/>
<dbReference type="eggNOG" id="KOG3741">
    <property type="taxonomic scope" value="Eukaryota"/>
</dbReference>
<dbReference type="GeneTree" id="ENSGT00390000001504"/>
<dbReference type="InParanoid" id="Q95RR8"/>
<dbReference type="OMA" id="ASHVINM"/>
<dbReference type="OrthoDB" id="204958at2759"/>
<dbReference type="PhylomeDB" id="Q95RR8"/>
<dbReference type="SignaLink" id="Q95RR8"/>
<dbReference type="BioGRID-ORCS" id="38369">
    <property type="hits" value="0 hits in 3 CRISPR screens"/>
</dbReference>
<dbReference type="EvolutionaryTrace" id="Q95RR8"/>
<dbReference type="GenomeRNAi" id="38369"/>
<dbReference type="PRO" id="PR:Q95RR8"/>
<dbReference type="Proteomes" id="UP000000803">
    <property type="component" value="Chromosome 3L"/>
</dbReference>
<dbReference type="Bgee" id="FBgn0035397">
    <property type="expression patterns" value="Expressed in adult olfactory receptor neuron Or92a (Drosophila) in antenna and 284 other cell types or tissues"/>
</dbReference>
<dbReference type="ExpressionAtlas" id="Q95RR8">
    <property type="expression patterns" value="baseline and differential"/>
</dbReference>
<dbReference type="GO" id="GO:0005737">
    <property type="term" value="C:cytoplasm"/>
    <property type="evidence" value="ECO:0007005"/>
    <property type="project" value="FlyBase"/>
</dbReference>
<dbReference type="GO" id="GO:0000932">
    <property type="term" value="C:P-body"/>
    <property type="evidence" value="ECO:0000318"/>
    <property type="project" value="GO_Central"/>
</dbReference>
<dbReference type="GO" id="GO:0031251">
    <property type="term" value="C:PAN complex"/>
    <property type="evidence" value="ECO:0000318"/>
    <property type="project" value="GO_Central"/>
</dbReference>
<dbReference type="GO" id="GO:0005524">
    <property type="term" value="F:ATP binding"/>
    <property type="evidence" value="ECO:0007669"/>
    <property type="project" value="UniProtKB-UniRule"/>
</dbReference>
<dbReference type="GO" id="GO:0008143">
    <property type="term" value="F:poly(A) binding"/>
    <property type="evidence" value="ECO:0000318"/>
    <property type="project" value="GO_Central"/>
</dbReference>
<dbReference type="GO" id="GO:0006397">
    <property type="term" value="P:mRNA processing"/>
    <property type="evidence" value="ECO:0007669"/>
    <property type="project" value="UniProtKB-KW"/>
</dbReference>
<dbReference type="GO" id="GO:0000289">
    <property type="term" value="P:nuclear-transcribed mRNA poly(A) tail shortening"/>
    <property type="evidence" value="ECO:0000318"/>
    <property type="project" value="GO_Central"/>
</dbReference>
<dbReference type="GO" id="GO:0010606">
    <property type="term" value="P:positive regulation of cytoplasmic mRNA processing body assembly"/>
    <property type="evidence" value="ECO:0007669"/>
    <property type="project" value="UniProtKB-UniRule"/>
</dbReference>
<dbReference type="FunFam" id="1.10.287.3700:FF:000001">
    <property type="entry name" value="PAN2-PAN3 deadenylation complex subunit PAN3"/>
    <property type="match status" value="1"/>
</dbReference>
<dbReference type="FunFam" id="1.10.510.10:FF:000451">
    <property type="entry name" value="PAN2-PAN3 deadenylation complex subunit PAN3"/>
    <property type="match status" value="1"/>
</dbReference>
<dbReference type="FunFam" id="1.20.5.5160:FF:000001">
    <property type="entry name" value="PAN2-PAN3 deadenylation complex subunit PAN3"/>
    <property type="match status" value="1"/>
</dbReference>
<dbReference type="Gene3D" id="1.10.287.3700">
    <property type="match status" value="1"/>
</dbReference>
<dbReference type="Gene3D" id="1.20.5.5160">
    <property type="match status" value="1"/>
</dbReference>
<dbReference type="Gene3D" id="1.10.510.10">
    <property type="entry name" value="Transferase(Phosphotransferase) domain 1"/>
    <property type="match status" value="1"/>
</dbReference>
<dbReference type="HAMAP" id="MF_03181">
    <property type="entry name" value="PAN3"/>
    <property type="match status" value="1"/>
</dbReference>
<dbReference type="InterPro" id="IPR032050">
    <property type="entry name" value="DUF4797"/>
</dbReference>
<dbReference type="InterPro" id="IPR011009">
    <property type="entry name" value="Kinase-like_dom_sf"/>
</dbReference>
<dbReference type="InterPro" id="IPR030844">
    <property type="entry name" value="PAN3"/>
</dbReference>
<dbReference type="InterPro" id="IPR041332">
    <property type="entry name" value="Pan3_PK"/>
</dbReference>
<dbReference type="PANTHER" id="PTHR12272">
    <property type="entry name" value="DEADENYLATION COMPLEX SUBUNIT PAN3"/>
    <property type="match status" value="1"/>
</dbReference>
<dbReference type="PANTHER" id="PTHR12272:SF11">
    <property type="entry name" value="PAN2-PAN3 DEADENYLATION COMPLEX SUBUNIT PAN3"/>
    <property type="match status" value="1"/>
</dbReference>
<dbReference type="Pfam" id="PF16051">
    <property type="entry name" value="DUF4797"/>
    <property type="match status" value="1"/>
</dbReference>
<dbReference type="Pfam" id="PF18101">
    <property type="entry name" value="Pan3_PK"/>
    <property type="match status" value="1"/>
</dbReference>
<dbReference type="SUPFAM" id="SSF56112">
    <property type="entry name" value="Protein kinase-like (PK-like)"/>
    <property type="match status" value="1"/>
</dbReference>
<accession>Q95RR8</accession>
<name>PAN3_DROME</name>
<comment type="function">
    <text evidence="1 4">Regulatory subunit of the poly(A)-nuclease (PAN) deadenylation complex, one of two cytoplasmic mRNA deadenylases involved in general and miRNA-mediated mRNA turnover. PAN specifically shortens poly(A) tails of RNA and the activity is stimulated by poly(A)-binding protein (PABP). PAN deadenylation is followed by rapid degradation of the shortened mRNA tails by the CCR4-NOT complex. Deadenylated mRNAs are then degraded by two alternative mechanisms, namely exosome-mediated 3'-5' exonucleolytic degradation, or deadenylation-dependent mRNA decaping and subsequent 5'-3' exonucleolytic degradation by XRN1. PAN3 acts as a positive regulator for PAN activity, recruiting the catalytic subunit PAN2 to mRNA via its interaction with RNA and PABP, and to miRNA targets via its interaction with GW182 family proteins.</text>
</comment>
<comment type="subunit">
    <text evidence="1 3 4 5 6">Homodimer. Forms a heterotrimer with a catalytic subunit PAN2 to form the poly(A)-nuclease (PAN) deadenylation complex. Interacts (via PAM-2 motif) with poly(A)-binding protein (via PABC domain), conferring substrate specificity of the enzyme complex (PubMed:23932717). Interacts with the GW182 family protein gw (PubMed:21981923, PubMed:23172285). Interacts with Gyf (PubMed:31114929).</text>
</comment>
<comment type="interaction">
    <interactant intactId="EBI-119468">
        <id>Q95RR8</id>
    </interactant>
    <interactant intactId="EBI-193297">
        <id>A1Z7K9</id>
        <label>PAN2</label>
    </interactant>
    <organismsDiffer>false</organismsDiffer>
    <experiments>4</experiments>
</comment>
<comment type="subcellular location">
    <subcellularLocation>
        <location evidence="1">Cytoplasm</location>
        <location evidence="1">P-body</location>
    </subcellularLocation>
</comment>
<comment type="domain">
    <text evidence="1">The N-terminal zinc finger binds to poly(A) RNA.</text>
</comment>
<comment type="domain">
    <text evidence="1 5">Contains a pseudokinase domain. The protein kinase domain is predicted to be catalytically inactive because some of the residues important for catalytic activity are substituted and it lacks the equivalent of the binding site for a peptide substrate. However, it has retained an ATP-binding site and ATP-binding is required for mRNA degradation, stimulating the activity of the PAN2 nuclease in vitro (PubMed:23932717). The nucleotide-binding site is juxtaposed to the RNase active site of PAN2 in the complex and may actually bind nucleosides of a poly(A) RNA rather than ATP, feeding the poly(A)-tail to the active site of the deadenylase and thus increasing the efficiency with which this distributive enzyme degrades oligo(A) RNAs (By similarity).</text>
</comment>
<comment type="domain">
    <text evidence="1">The pseudokinase domain, the coiled-coil (CC), and C-terminal knob domain (CK) form a structural unit (PKC) that forms an extensive high-affinity interaction surface for PAN2.</text>
</comment>
<comment type="similarity">
    <text evidence="1">Belongs to the protein kinase superfamily. PAN3 family.</text>
</comment>
<proteinExistence type="evidence at protein level"/>
<organism>
    <name type="scientific">Drosophila melanogaster</name>
    <name type="common">Fruit fly</name>
    <dbReference type="NCBI Taxonomy" id="7227"/>
    <lineage>
        <taxon>Eukaryota</taxon>
        <taxon>Metazoa</taxon>
        <taxon>Ecdysozoa</taxon>
        <taxon>Arthropoda</taxon>
        <taxon>Hexapoda</taxon>
        <taxon>Insecta</taxon>
        <taxon>Pterygota</taxon>
        <taxon>Neoptera</taxon>
        <taxon>Endopterygota</taxon>
        <taxon>Diptera</taxon>
        <taxon>Brachycera</taxon>
        <taxon>Muscomorpha</taxon>
        <taxon>Ephydroidea</taxon>
        <taxon>Drosophilidae</taxon>
        <taxon>Drosophila</taxon>
        <taxon>Sophophora</taxon>
    </lineage>
</organism>
<keyword id="KW-0002">3D-structure</keyword>
<keyword id="KW-0067">ATP-binding</keyword>
<keyword id="KW-0175">Coiled coil</keyword>
<keyword id="KW-0963">Cytoplasm</keyword>
<keyword id="KW-0507">mRNA processing</keyword>
<keyword id="KW-0547">Nucleotide-binding</keyword>
<keyword id="KW-1185">Reference proteome</keyword>
<reference key="1">
    <citation type="journal article" date="2000" name="Science">
        <title>The genome sequence of Drosophila melanogaster.</title>
        <authorList>
            <person name="Adams M.D."/>
            <person name="Celniker S.E."/>
            <person name="Holt R.A."/>
            <person name="Evans C.A."/>
            <person name="Gocayne J.D."/>
            <person name="Amanatides P.G."/>
            <person name="Scherer S.E."/>
            <person name="Li P.W."/>
            <person name="Hoskins R.A."/>
            <person name="Galle R.F."/>
            <person name="George R.A."/>
            <person name="Lewis S.E."/>
            <person name="Richards S."/>
            <person name="Ashburner M."/>
            <person name="Henderson S.N."/>
            <person name="Sutton G.G."/>
            <person name="Wortman J.R."/>
            <person name="Yandell M.D."/>
            <person name="Zhang Q."/>
            <person name="Chen L.X."/>
            <person name="Brandon R.C."/>
            <person name="Rogers Y.-H.C."/>
            <person name="Blazej R.G."/>
            <person name="Champe M."/>
            <person name="Pfeiffer B.D."/>
            <person name="Wan K.H."/>
            <person name="Doyle C."/>
            <person name="Baxter E.G."/>
            <person name="Helt G."/>
            <person name="Nelson C.R."/>
            <person name="Miklos G.L.G."/>
            <person name="Abril J.F."/>
            <person name="Agbayani A."/>
            <person name="An H.-J."/>
            <person name="Andrews-Pfannkoch C."/>
            <person name="Baldwin D."/>
            <person name="Ballew R.M."/>
            <person name="Basu A."/>
            <person name="Baxendale J."/>
            <person name="Bayraktaroglu L."/>
            <person name="Beasley E.M."/>
            <person name="Beeson K.Y."/>
            <person name="Benos P.V."/>
            <person name="Berman B.P."/>
            <person name="Bhandari D."/>
            <person name="Bolshakov S."/>
            <person name="Borkova D."/>
            <person name="Botchan M.R."/>
            <person name="Bouck J."/>
            <person name="Brokstein P."/>
            <person name="Brottier P."/>
            <person name="Burtis K.C."/>
            <person name="Busam D.A."/>
            <person name="Butler H."/>
            <person name="Cadieu E."/>
            <person name="Center A."/>
            <person name="Chandra I."/>
            <person name="Cherry J.M."/>
            <person name="Cawley S."/>
            <person name="Dahlke C."/>
            <person name="Davenport L.B."/>
            <person name="Davies P."/>
            <person name="de Pablos B."/>
            <person name="Delcher A."/>
            <person name="Deng Z."/>
            <person name="Mays A.D."/>
            <person name="Dew I."/>
            <person name="Dietz S.M."/>
            <person name="Dodson K."/>
            <person name="Doup L.E."/>
            <person name="Downes M."/>
            <person name="Dugan-Rocha S."/>
            <person name="Dunkov B.C."/>
            <person name="Dunn P."/>
            <person name="Durbin K.J."/>
            <person name="Evangelista C.C."/>
            <person name="Ferraz C."/>
            <person name="Ferriera S."/>
            <person name="Fleischmann W."/>
            <person name="Fosler C."/>
            <person name="Gabrielian A.E."/>
            <person name="Garg N.S."/>
            <person name="Gelbart W.M."/>
            <person name="Glasser K."/>
            <person name="Glodek A."/>
            <person name="Gong F."/>
            <person name="Gorrell J.H."/>
            <person name="Gu Z."/>
            <person name="Guan P."/>
            <person name="Harris M."/>
            <person name="Harris N.L."/>
            <person name="Harvey D.A."/>
            <person name="Heiman T.J."/>
            <person name="Hernandez J.R."/>
            <person name="Houck J."/>
            <person name="Hostin D."/>
            <person name="Houston K.A."/>
            <person name="Howland T.J."/>
            <person name="Wei M.-H."/>
            <person name="Ibegwam C."/>
            <person name="Jalali M."/>
            <person name="Kalush F."/>
            <person name="Karpen G.H."/>
            <person name="Ke Z."/>
            <person name="Kennison J.A."/>
            <person name="Ketchum K.A."/>
            <person name="Kimmel B.E."/>
            <person name="Kodira C.D."/>
            <person name="Kraft C.L."/>
            <person name="Kravitz S."/>
            <person name="Kulp D."/>
            <person name="Lai Z."/>
            <person name="Lasko P."/>
            <person name="Lei Y."/>
            <person name="Levitsky A.A."/>
            <person name="Li J.H."/>
            <person name="Li Z."/>
            <person name="Liang Y."/>
            <person name="Lin X."/>
            <person name="Liu X."/>
            <person name="Mattei B."/>
            <person name="McIntosh T.C."/>
            <person name="McLeod M.P."/>
            <person name="McPherson D."/>
            <person name="Merkulov G."/>
            <person name="Milshina N.V."/>
            <person name="Mobarry C."/>
            <person name="Morris J."/>
            <person name="Moshrefi A."/>
            <person name="Mount S.M."/>
            <person name="Moy M."/>
            <person name="Murphy B."/>
            <person name="Murphy L."/>
            <person name="Muzny D.M."/>
            <person name="Nelson D.L."/>
            <person name="Nelson D.R."/>
            <person name="Nelson K.A."/>
            <person name="Nixon K."/>
            <person name="Nusskern D.R."/>
            <person name="Pacleb J.M."/>
            <person name="Palazzolo M."/>
            <person name="Pittman G.S."/>
            <person name="Pan S."/>
            <person name="Pollard J."/>
            <person name="Puri V."/>
            <person name="Reese M.G."/>
            <person name="Reinert K."/>
            <person name="Remington K."/>
            <person name="Saunders R.D.C."/>
            <person name="Scheeler F."/>
            <person name="Shen H."/>
            <person name="Shue B.C."/>
            <person name="Siden-Kiamos I."/>
            <person name="Simpson M."/>
            <person name="Skupski M.P."/>
            <person name="Smith T.J."/>
            <person name="Spier E."/>
            <person name="Spradling A.C."/>
            <person name="Stapleton M."/>
            <person name="Strong R."/>
            <person name="Sun E."/>
            <person name="Svirskas R."/>
            <person name="Tector C."/>
            <person name="Turner R."/>
            <person name="Venter E."/>
            <person name="Wang A.H."/>
            <person name="Wang X."/>
            <person name="Wang Z.-Y."/>
            <person name="Wassarman D.A."/>
            <person name="Weinstock G.M."/>
            <person name="Weissenbach J."/>
            <person name="Williams S.M."/>
            <person name="Woodage T."/>
            <person name="Worley K.C."/>
            <person name="Wu D."/>
            <person name="Yang S."/>
            <person name="Yao Q.A."/>
            <person name="Ye J."/>
            <person name="Yeh R.-F."/>
            <person name="Zaveri J.S."/>
            <person name="Zhan M."/>
            <person name="Zhang G."/>
            <person name="Zhao Q."/>
            <person name="Zheng L."/>
            <person name="Zheng X.H."/>
            <person name="Zhong F.N."/>
            <person name="Zhong W."/>
            <person name="Zhou X."/>
            <person name="Zhu S.C."/>
            <person name="Zhu X."/>
            <person name="Smith H.O."/>
            <person name="Gibbs R.A."/>
            <person name="Myers E.W."/>
            <person name="Rubin G.M."/>
            <person name="Venter J.C."/>
        </authorList>
    </citation>
    <scope>NUCLEOTIDE SEQUENCE [LARGE SCALE GENOMIC DNA]</scope>
    <source>
        <strain>Berkeley</strain>
    </source>
</reference>
<reference key="2">
    <citation type="journal article" date="2002" name="Genome Biol.">
        <title>Annotation of the Drosophila melanogaster euchromatic genome: a systematic review.</title>
        <authorList>
            <person name="Misra S."/>
            <person name="Crosby M.A."/>
            <person name="Mungall C.J."/>
            <person name="Matthews B.B."/>
            <person name="Campbell K.S."/>
            <person name="Hradecky P."/>
            <person name="Huang Y."/>
            <person name="Kaminker J.S."/>
            <person name="Millburn G.H."/>
            <person name="Prochnik S.E."/>
            <person name="Smith C.D."/>
            <person name="Tupy J.L."/>
            <person name="Whitfield E.J."/>
            <person name="Bayraktaroglu L."/>
            <person name="Berman B.P."/>
            <person name="Bettencourt B.R."/>
            <person name="Celniker S.E."/>
            <person name="de Grey A.D.N.J."/>
            <person name="Drysdale R.A."/>
            <person name="Harris N.L."/>
            <person name="Richter J."/>
            <person name="Russo S."/>
            <person name="Schroeder A.J."/>
            <person name="Shu S.Q."/>
            <person name="Stapleton M."/>
            <person name="Yamada C."/>
            <person name="Ashburner M."/>
            <person name="Gelbart W.M."/>
            <person name="Rubin G.M."/>
            <person name="Lewis S.E."/>
        </authorList>
    </citation>
    <scope>GENOME REANNOTATION</scope>
    <source>
        <strain>Berkeley</strain>
    </source>
</reference>
<reference key="3">
    <citation type="journal article" date="2002" name="Genome Biol.">
        <title>A Drosophila full-length cDNA resource.</title>
        <authorList>
            <person name="Stapleton M."/>
            <person name="Carlson J.W."/>
            <person name="Brokstein P."/>
            <person name="Yu C."/>
            <person name="Champe M."/>
            <person name="George R.A."/>
            <person name="Guarin H."/>
            <person name="Kronmiller B."/>
            <person name="Pacleb J.M."/>
            <person name="Park S."/>
            <person name="Wan K.H."/>
            <person name="Rubin G.M."/>
            <person name="Celniker S.E."/>
        </authorList>
    </citation>
    <scope>NUCLEOTIDE SEQUENCE [LARGE SCALE MRNA]</scope>
    <source>
        <strain>Berkeley</strain>
        <tissue>Embryo</tissue>
    </source>
</reference>
<reference key="4">
    <citation type="journal article" date="2011" name="Mol. Cell">
        <title>GW182 proteins directly recruit cytoplasmic deadenylase complexes to miRNA targets.</title>
        <authorList>
            <person name="Braun J.E."/>
            <person name="Huntzinger E."/>
            <person name="Fauser M."/>
            <person name="Izaurralde E."/>
        </authorList>
    </citation>
    <scope>INTERACTION WITH GW</scope>
</reference>
<reference key="5">
    <citation type="journal article" date="2013" name="Nucleic Acids Res.">
        <title>The interactions of GW182 proteins with PABP and deadenylases are required for both translational repression and degradation of miRNA targets.</title>
        <authorList>
            <person name="Huntzinger E."/>
            <person name="Kuzuoglu-Ozturk D."/>
            <person name="Braun J.E."/>
            <person name="Eulalio A."/>
            <person name="Wohlbold L."/>
            <person name="Izaurralde E."/>
        </authorList>
    </citation>
    <scope>FUNCTION</scope>
    <scope>INTERACTION WITH GW</scope>
</reference>
<reference key="6">
    <citation type="journal article" date="2019" name="Nucleic Acids Res.">
        <title>Direct role for the Drosophila GIGYF protein in 4EHP-mediated mRNA repression.</title>
        <authorList>
            <person name="Ruscica V."/>
            <person name="Bawankar P."/>
            <person name="Peter D."/>
            <person name="Helms S."/>
            <person name="Igreja C."/>
            <person name="Izaurralde E."/>
        </authorList>
    </citation>
    <scope>INTERACTION WITH GYF</scope>
</reference>
<reference key="7">
    <citation type="journal article" date="2013" name="Mol. Cell">
        <title>Structure of the PAN3 pseudokinase reveals the basis for interactions with the PAN2 deadenylase and the GW182 proteins.</title>
        <authorList>
            <person name="Christie M."/>
            <person name="Boland A."/>
            <person name="Huntzinger E."/>
            <person name="Weichenrieder O."/>
            <person name="Izaurralde E."/>
        </authorList>
    </citation>
    <scope>X-RAY CRYSTALLOGRAPHY (3.60 ANGSTROMS) OF 349-790 IN COMPLEX WITH AMP</scope>
    <scope>INTERACTION WITH PAN2</scope>
    <scope>SUBUNIT</scope>
</reference>
<protein>
    <recommendedName>
        <fullName evidence="1">PAN2-PAN3 deadenylation complex subunit PAN3</fullName>
    </recommendedName>
    <alternativeName>
        <fullName evidence="1">PAB1P-dependent poly(A)-specific ribonuclease</fullName>
    </alternativeName>
    <alternativeName>
        <fullName evidence="1">Poly(A)-nuclease deadenylation complex subunit 3</fullName>
        <shortName evidence="1">PAN deadenylation complex subunit 3</shortName>
    </alternativeName>
</protein>
<gene>
    <name evidence="1" type="primary">PAN3</name>
    <name type="ORF">CG11486</name>
</gene>
<evidence type="ECO:0000255" key="1">
    <source>
        <dbReference type="HAMAP-Rule" id="MF_03181"/>
    </source>
</evidence>
<evidence type="ECO:0000256" key="2">
    <source>
        <dbReference type="SAM" id="MobiDB-lite"/>
    </source>
</evidence>
<evidence type="ECO:0000269" key="3">
    <source>
    </source>
</evidence>
<evidence type="ECO:0000269" key="4">
    <source>
    </source>
</evidence>
<evidence type="ECO:0000269" key="5">
    <source>
    </source>
</evidence>
<evidence type="ECO:0000269" key="6">
    <source>
    </source>
</evidence>
<feature type="chain" id="PRO_0000426721" description="PAN2-PAN3 deadenylation complex subunit PAN3">
    <location>
        <begin position="1"/>
        <end position="790"/>
    </location>
</feature>
<feature type="region of interest" description="Disordered" evidence="2">
    <location>
        <begin position="166"/>
        <end position="191"/>
    </location>
</feature>
<feature type="region of interest" description="Disordered" evidence="2">
    <location>
        <begin position="235"/>
        <end position="259"/>
    </location>
</feature>
<feature type="region of interest" description="Pseudokinase domain" evidence="1">
    <location>
        <begin position="369"/>
        <end position="655"/>
    </location>
</feature>
<feature type="region of interest" description="Knob domain" evidence="1">
    <location>
        <begin position="695"/>
        <end position="790"/>
    </location>
</feature>
<feature type="coiled-coil region" evidence="1">
    <location>
        <begin position="656"/>
        <end position="694"/>
    </location>
</feature>
<feature type="compositionally biased region" description="Low complexity" evidence="2">
    <location>
        <begin position="168"/>
        <end position="191"/>
    </location>
</feature>
<feature type="binding site" evidence="1 5">
    <location>
        <position position="423"/>
    </location>
    <ligand>
        <name>ATP</name>
        <dbReference type="ChEBI" id="CHEBI:30616"/>
    </ligand>
</feature>
<feature type="binding site" evidence="1 5">
    <location>
        <begin position="472"/>
        <end position="479"/>
    </location>
    <ligand>
        <name>ATP</name>
        <dbReference type="ChEBI" id="CHEBI:30616"/>
    </ligand>
</feature>
<feature type="binding site" evidence="1">
    <location>
        <begin position="552"/>
        <end position="553"/>
    </location>
    <ligand>
        <name>ATP</name>
        <dbReference type="ChEBI" id="CHEBI:30616"/>
    </ligand>
</feature>